<name>HSPQ_SALPC</name>
<sequence length="105" mass="11996">MIASKFGIGQQVRHSLLGYLGVVVDIDPEYSLDEPSPDELAVNDELRAAPWYHVVMEDDDGQPVHTYLAEAQLRSEMRDEHPEQPSMDELARTIRKQLQAPRLRN</sequence>
<reference key="1">
    <citation type="journal article" date="2009" name="PLoS ONE">
        <title>Salmonella paratyphi C: genetic divergence from Salmonella choleraesuis and pathogenic convergence with Salmonella typhi.</title>
        <authorList>
            <person name="Liu W.-Q."/>
            <person name="Feng Y."/>
            <person name="Wang Y."/>
            <person name="Zou Q.-H."/>
            <person name="Chen F."/>
            <person name="Guo J.-T."/>
            <person name="Peng Y.-H."/>
            <person name="Jin Y."/>
            <person name="Li Y.-G."/>
            <person name="Hu S.-N."/>
            <person name="Johnston R.N."/>
            <person name="Liu G.-R."/>
            <person name="Liu S.-L."/>
        </authorList>
    </citation>
    <scope>NUCLEOTIDE SEQUENCE [LARGE SCALE GENOMIC DNA]</scope>
    <source>
        <strain>RKS4594</strain>
    </source>
</reference>
<accession>C0Q8C6</accession>
<comment type="function">
    <text evidence="1">Involved in the degradation of certain denaturated proteins, including DnaA, during heat shock stress.</text>
</comment>
<comment type="subcellular location">
    <subcellularLocation>
        <location evidence="1">Cytoplasm</location>
    </subcellularLocation>
</comment>
<comment type="similarity">
    <text evidence="1">Belongs to the HspQ family.</text>
</comment>
<dbReference type="EMBL" id="CP000857">
    <property type="protein sequence ID" value="ACN46771.1"/>
    <property type="molecule type" value="Genomic_DNA"/>
</dbReference>
<dbReference type="RefSeq" id="WP_000561983.1">
    <property type="nucleotide sequence ID" value="NC_012125.1"/>
</dbReference>
<dbReference type="SMR" id="C0Q8C6"/>
<dbReference type="GeneID" id="66755429"/>
<dbReference type="KEGG" id="sei:SPC_2670"/>
<dbReference type="HOGENOM" id="CLU_123865_1_0_6"/>
<dbReference type="Proteomes" id="UP000001599">
    <property type="component" value="Chromosome"/>
</dbReference>
<dbReference type="GO" id="GO:0005737">
    <property type="term" value="C:cytoplasm"/>
    <property type="evidence" value="ECO:0007669"/>
    <property type="project" value="UniProtKB-SubCell"/>
</dbReference>
<dbReference type="GO" id="GO:0003677">
    <property type="term" value="F:DNA binding"/>
    <property type="evidence" value="ECO:0007669"/>
    <property type="project" value="InterPro"/>
</dbReference>
<dbReference type="GO" id="GO:0009408">
    <property type="term" value="P:response to heat"/>
    <property type="evidence" value="ECO:0007669"/>
    <property type="project" value="UniProtKB-UniRule"/>
</dbReference>
<dbReference type="Gene3D" id="2.30.30.390">
    <property type="entry name" value="Hemimethylated DNA-binding domain"/>
    <property type="match status" value="1"/>
</dbReference>
<dbReference type="HAMAP" id="MF_01194">
    <property type="entry name" value="HspQ"/>
    <property type="match status" value="1"/>
</dbReference>
<dbReference type="InterPro" id="IPR011722">
    <property type="entry name" value="Hemimethylated_DNA-bd_dom"/>
</dbReference>
<dbReference type="InterPro" id="IPR036623">
    <property type="entry name" value="Hemimethylated_DNA-bd_sf"/>
</dbReference>
<dbReference type="InterPro" id="IPR022866">
    <property type="entry name" value="HspQ"/>
</dbReference>
<dbReference type="NCBIfam" id="NF010729">
    <property type="entry name" value="PRK14129.1"/>
    <property type="match status" value="1"/>
</dbReference>
<dbReference type="NCBIfam" id="TIGR02097">
    <property type="entry name" value="yccV"/>
    <property type="match status" value="1"/>
</dbReference>
<dbReference type="Pfam" id="PF08755">
    <property type="entry name" value="YccV-like"/>
    <property type="match status" value="1"/>
</dbReference>
<dbReference type="SMART" id="SM00992">
    <property type="entry name" value="YccV-like"/>
    <property type="match status" value="1"/>
</dbReference>
<dbReference type="SUPFAM" id="SSF141255">
    <property type="entry name" value="YccV-like"/>
    <property type="match status" value="1"/>
</dbReference>
<keyword id="KW-0963">Cytoplasm</keyword>
<keyword id="KW-0346">Stress response</keyword>
<organism>
    <name type="scientific">Salmonella paratyphi C (strain RKS4594)</name>
    <dbReference type="NCBI Taxonomy" id="476213"/>
    <lineage>
        <taxon>Bacteria</taxon>
        <taxon>Pseudomonadati</taxon>
        <taxon>Pseudomonadota</taxon>
        <taxon>Gammaproteobacteria</taxon>
        <taxon>Enterobacterales</taxon>
        <taxon>Enterobacteriaceae</taxon>
        <taxon>Salmonella</taxon>
    </lineage>
</organism>
<proteinExistence type="inferred from homology"/>
<feature type="chain" id="PRO_1000164514" description="Heat shock protein HspQ">
    <location>
        <begin position="1"/>
        <end position="105"/>
    </location>
</feature>
<feature type="region of interest" description="Disordered" evidence="2">
    <location>
        <begin position="76"/>
        <end position="105"/>
    </location>
</feature>
<evidence type="ECO:0000255" key="1">
    <source>
        <dbReference type="HAMAP-Rule" id="MF_01194"/>
    </source>
</evidence>
<evidence type="ECO:0000256" key="2">
    <source>
        <dbReference type="SAM" id="MobiDB-lite"/>
    </source>
</evidence>
<gene>
    <name evidence="1" type="primary">hspQ</name>
    <name type="ordered locus">SPC_2670</name>
</gene>
<protein>
    <recommendedName>
        <fullName evidence="1">Heat shock protein HspQ</fullName>
    </recommendedName>
</protein>